<accession>B7NNT8</accession>
<gene>
    <name evidence="1" type="primary">arnF</name>
    <name type="ordered locus">ECIAI39_2406</name>
</gene>
<name>ARNF_ECO7I</name>
<reference key="1">
    <citation type="journal article" date="2009" name="PLoS Genet.">
        <title>Organised genome dynamics in the Escherichia coli species results in highly diverse adaptive paths.</title>
        <authorList>
            <person name="Touchon M."/>
            <person name="Hoede C."/>
            <person name="Tenaillon O."/>
            <person name="Barbe V."/>
            <person name="Baeriswyl S."/>
            <person name="Bidet P."/>
            <person name="Bingen E."/>
            <person name="Bonacorsi S."/>
            <person name="Bouchier C."/>
            <person name="Bouvet O."/>
            <person name="Calteau A."/>
            <person name="Chiapello H."/>
            <person name="Clermont O."/>
            <person name="Cruveiller S."/>
            <person name="Danchin A."/>
            <person name="Diard M."/>
            <person name="Dossat C."/>
            <person name="Karoui M.E."/>
            <person name="Frapy E."/>
            <person name="Garry L."/>
            <person name="Ghigo J.M."/>
            <person name="Gilles A.M."/>
            <person name="Johnson J."/>
            <person name="Le Bouguenec C."/>
            <person name="Lescat M."/>
            <person name="Mangenot S."/>
            <person name="Martinez-Jehanne V."/>
            <person name="Matic I."/>
            <person name="Nassif X."/>
            <person name="Oztas S."/>
            <person name="Petit M.A."/>
            <person name="Pichon C."/>
            <person name="Rouy Z."/>
            <person name="Ruf C.S."/>
            <person name="Schneider D."/>
            <person name="Tourret J."/>
            <person name="Vacherie B."/>
            <person name="Vallenet D."/>
            <person name="Medigue C."/>
            <person name="Rocha E.P.C."/>
            <person name="Denamur E."/>
        </authorList>
    </citation>
    <scope>NUCLEOTIDE SEQUENCE [LARGE SCALE GENOMIC DNA]</scope>
    <source>
        <strain>IAI39 / ExPEC</strain>
    </source>
</reference>
<proteinExistence type="inferred from homology"/>
<evidence type="ECO:0000255" key="1">
    <source>
        <dbReference type="HAMAP-Rule" id="MF_00538"/>
    </source>
</evidence>
<feature type="chain" id="PRO_1000128660" description="Probable 4-amino-4-deoxy-L-arabinose-phosphoundecaprenol flippase subunit ArnF">
    <location>
        <begin position="1"/>
        <end position="128"/>
    </location>
</feature>
<feature type="topological domain" description="Cytoplasmic" evidence="1">
    <location>
        <begin position="1"/>
        <end position="2"/>
    </location>
</feature>
<feature type="transmembrane region" description="Helical" evidence="1">
    <location>
        <begin position="3"/>
        <end position="23"/>
    </location>
</feature>
<feature type="topological domain" description="Periplasmic" evidence="1">
    <location>
        <begin position="24"/>
        <end position="32"/>
    </location>
</feature>
<feature type="transmembrane region" description="Helical" evidence="1">
    <location>
        <begin position="33"/>
        <end position="53"/>
    </location>
</feature>
<feature type="topological domain" description="Cytoplasmic" evidence="1">
    <location>
        <begin position="54"/>
        <end position="76"/>
    </location>
</feature>
<feature type="transmembrane region" description="Helical" evidence="1">
    <location>
        <begin position="77"/>
        <end position="97"/>
    </location>
</feature>
<feature type="topological domain" description="Periplasmic" evidence="1">
    <location>
        <begin position="98"/>
        <end position="100"/>
    </location>
</feature>
<feature type="transmembrane region" description="Helical" evidence="1">
    <location>
        <begin position="101"/>
        <end position="121"/>
    </location>
</feature>
<feature type="topological domain" description="Cytoplasmic" evidence="1">
    <location>
        <begin position="122"/>
        <end position="128"/>
    </location>
</feature>
<comment type="function">
    <text evidence="1">Translocates 4-amino-4-deoxy-L-arabinose-phosphoundecaprenol (alpha-L-Ara4N-phosphoundecaprenol) from the cytoplasmic to the periplasmic side of the inner membrane.</text>
</comment>
<comment type="pathway">
    <text evidence="1">Bacterial outer membrane biogenesis; lipopolysaccharide biosynthesis.</text>
</comment>
<comment type="subunit">
    <text evidence="1">Heterodimer of ArnE and ArnF.</text>
</comment>
<comment type="subcellular location">
    <subcellularLocation>
        <location evidence="1">Cell inner membrane</location>
        <topology evidence="1">Multi-pass membrane protein</topology>
    </subcellularLocation>
</comment>
<comment type="similarity">
    <text evidence="1">Belongs to the ArnF family.</text>
</comment>
<dbReference type="EMBL" id="CU928164">
    <property type="protein sequence ID" value="CAR18532.1"/>
    <property type="molecule type" value="Genomic_DNA"/>
</dbReference>
<dbReference type="RefSeq" id="WP_000523866.1">
    <property type="nucleotide sequence ID" value="NC_011750.1"/>
</dbReference>
<dbReference type="RefSeq" id="YP_002408362.1">
    <property type="nucleotide sequence ID" value="NC_011750.1"/>
</dbReference>
<dbReference type="STRING" id="585057.ECIAI39_2406"/>
<dbReference type="KEGG" id="ect:ECIAI39_2406"/>
<dbReference type="PATRIC" id="fig|585057.6.peg.2508"/>
<dbReference type="HOGENOM" id="CLU_131462_1_0_6"/>
<dbReference type="UniPathway" id="UPA00030"/>
<dbReference type="Proteomes" id="UP000000749">
    <property type="component" value="Chromosome"/>
</dbReference>
<dbReference type="GO" id="GO:0005886">
    <property type="term" value="C:plasma membrane"/>
    <property type="evidence" value="ECO:0007669"/>
    <property type="project" value="UniProtKB-SubCell"/>
</dbReference>
<dbReference type="GO" id="GO:1901505">
    <property type="term" value="F:carbohydrate derivative transmembrane transporter activity"/>
    <property type="evidence" value="ECO:0007669"/>
    <property type="project" value="InterPro"/>
</dbReference>
<dbReference type="GO" id="GO:0009245">
    <property type="term" value="P:lipid A biosynthetic process"/>
    <property type="evidence" value="ECO:0007669"/>
    <property type="project" value="UniProtKB-UniRule"/>
</dbReference>
<dbReference type="GO" id="GO:0009103">
    <property type="term" value="P:lipopolysaccharide biosynthetic process"/>
    <property type="evidence" value="ECO:0007669"/>
    <property type="project" value="UniProtKB-UniRule"/>
</dbReference>
<dbReference type="FunFam" id="1.10.3730.20:FF:000003">
    <property type="entry name" value="Probable 4-amino-4-deoxy-L-arabinose-phosphoundecaprenol flippase subunit ArnF"/>
    <property type="match status" value="1"/>
</dbReference>
<dbReference type="Gene3D" id="1.10.3730.20">
    <property type="match status" value="1"/>
</dbReference>
<dbReference type="HAMAP" id="MF_00538">
    <property type="entry name" value="Flippase_ArnF"/>
    <property type="match status" value="1"/>
</dbReference>
<dbReference type="InterPro" id="IPR022832">
    <property type="entry name" value="Flippase_ArnF"/>
</dbReference>
<dbReference type="InterPro" id="IPR000390">
    <property type="entry name" value="Small_drug/metabolite_transptr"/>
</dbReference>
<dbReference type="NCBIfam" id="NF002816">
    <property type="entry name" value="PRK02971.1-2"/>
    <property type="match status" value="1"/>
</dbReference>
<dbReference type="PANTHER" id="PTHR30561:SF9">
    <property type="entry name" value="4-AMINO-4-DEOXY-L-ARABINOSE-PHOSPHOUNDECAPRENOL FLIPPASE SUBUNIT ARNF-RELATED"/>
    <property type="match status" value="1"/>
</dbReference>
<dbReference type="PANTHER" id="PTHR30561">
    <property type="entry name" value="SMR FAMILY PROTON-DEPENDENT DRUG EFFLUX TRANSPORTER SUGE"/>
    <property type="match status" value="1"/>
</dbReference>
<dbReference type="SUPFAM" id="SSF103481">
    <property type="entry name" value="Multidrug resistance efflux transporter EmrE"/>
    <property type="match status" value="1"/>
</dbReference>
<organism>
    <name type="scientific">Escherichia coli O7:K1 (strain IAI39 / ExPEC)</name>
    <dbReference type="NCBI Taxonomy" id="585057"/>
    <lineage>
        <taxon>Bacteria</taxon>
        <taxon>Pseudomonadati</taxon>
        <taxon>Pseudomonadota</taxon>
        <taxon>Gammaproteobacteria</taxon>
        <taxon>Enterobacterales</taxon>
        <taxon>Enterobacteriaceae</taxon>
        <taxon>Escherichia</taxon>
    </lineage>
</organism>
<sequence length="128" mass="14072">MGLMWGLFSVIIASAAQLSLGFAASHLPPMTHLWDFIAALLAFGLDARILLLGLQGYLLSVFCWYKTLHKLALSKAYALLSMSYVLVWIASMVLPGWEGTFSLKALLGVACIMSGLMLIFLPTTKQRY</sequence>
<protein>
    <recommendedName>
        <fullName evidence="1">Probable 4-amino-4-deoxy-L-arabinose-phosphoundecaprenol flippase subunit ArnF</fullName>
        <shortName evidence="1">L-Ara4N-phosphoundecaprenol flippase subunit ArnF</shortName>
    </recommendedName>
    <alternativeName>
        <fullName evidence="1">Undecaprenyl phosphate-aminoarabinose flippase subunit ArnF</fullName>
    </alternativeName>
</protein>
<keyword id="KW-0997">Cell inner membrane</keyword>
<keyword id="KW-1003">Cell membrane</keyword>
<keyword id="KW-0441">Lipid A biosynthesis</keyword>
<keyword id="KW-0444">Lipid biosynthesis</keyword>
<keyword id="KW-0443">Lipid metabolism</keyword>
<keyword id="KW-0448">Lipopolysaccharide biosynthesis</keyword>
<keyword id="KW-0472">Membrane</keyword>
<keyword id="KW-0812">Transmembrane</keyword>
<keyword id="KW-1133">Transmembrane helix</keyword>
<keyword id="KW-0813">Transport</keyword>